<organism>
    <name type="scientific">Homo sapiens</name>
    <name type="common">Human</name>
    <dbReference type="NCBI Taxonomy" id="9606"/>
    <lineage>
        <taxon>Eukaryota</taxon>
        <taxon>Metazoa</taxon>
        <taxon>Chordata</taxon>
        <taxon>Craniata</taxon>
        <taxon>Vertebrata</taxon>
        <taxon>Euteleostomi</taxon>
        <taxon>Mammalia</taxon>
        <taxon>Eutheria</taxon>
        <taxon>Euarchontoglires</taxon>
        <taxon>Primates</taxon>
        <taxon>Haplorrhini</taxon>
        <taxon>Catarrhini</taxon>
        <taxon>Hominidae</taxon>
        <taxon>Homo</taxon>
    </lineage>
</organism>
<accession>Q9Y216</accession>
<accession>A1L4K9</accession>
<accession>B4DG87</accession>
<accession>Q68DX4</accession>
<dbReference type="EC" id="3.1.3.64" evidence="2"/>
<dbReference type="EMBL" id="AK294468">
    <property type="protein sequence ID" value="BAG57698.1"/>
    <property type="molecule type" value="mRNA"/>
</dbReference>
<dbReference type="EMBL" id="CR749240">
    <property type="protein sequence ID" value="CAH18096.1"/>
    <property type="molecule type" value="mRNA"/>
</dbReference>
<dbReference type="EMBL" id="AC124074">
    <property type="status" value="NOT_ANNOTATED_CDS"/>
    <property type="molecule type" value="Genomic_DNA"/>
</dbReference>
<dbReference type="EMBL" id="BC130577">
    <property type="protein sequence ID" value="AAI30578.1"/>
    <property type="molecule type" value="mRNA"/>
</dbReference>
<dbReference type="EMBL" id="BC130579">
    <property type="protein sequence ID" value="AAI30580.1"/>
    <property type="molecule type" value="mRNA"/>
</dbReference>
<dbReference type="EMBL" id="AF073482">
    <property type="protein sequence ID" value="AAC77820.1"/>
    <property type="molecule type" value="mRNA"/>
</dbReference>
<dbReference type="CCDS" id="CCDS34851.1">
    <molecule id="Q9Y216-1"/>
</dbReference>
<dbReference type="RefSeq" id="NP_004677.3">
    <molecule id="Q9Y216-1"/>
    <property type="nucleotide sequence ID" value="NM_004686.4"/>
</dbReference>
<dbReference type="SMR" id="Q9Y216"/>
<dbReference type="BioGRID" id="114559">
    <property type="interactions" value="65"/>
</dbReference>
<dbReference type="FunCoup" id="Q9Y216">
    <property type="interactions" value="1522"/>
</dbReference>
<dbReference type="IntAct" id="Q9Y216">
    <property type="interactions" value="14"/>
</dbReference>
<dbReference type="MINT" id="Q9Y216"/>
<dbReference type="STRING" id="9606.ENSP00000180173"/>
<dbReference type="DEPOD" id="MTMR7"/>
<dbReference type="iPTMnet" id="Q9Y216"/>
<dbReference type="PhosphoSitePlus" id="Q9Y216"/>
<dbReference type="BioMuta" id="MTMR7"/>
<dbReference type="DMDM" id="296439297"/>
<dbReference type="MassIVE" id="Q9Y216"/>
<dbReference type="PaxDb" id="9606-ENSP00000180173"/>
<dbReference type="PeptideAtlas" id="Q9Y216"/>
<dbReference type="ProteomicsDB" id="85591">
    <molecule id="Q9Y216-1"/>
</dbReference>
<dbReference type="ProteomicsDB" id="85592">
    <molecule id="Q9Y216-2"/>
</dbReference>
<dbReference type="Antibodypedia" id="1473">
    <property type="antibodies" value="63 antibodies from 17 providers"/>
</dbReference>
<dbReference type="DNASU" id="9108"/>
<dbReference type="Ensembl" id="ENST00000180173.10">
    <molecule id="Q9Y216-1"/>
    <property type="protein sequence ID" value="ENSP00000180173.4"/>
    <property type="gene ID" value="ENSG00000003987.14"/>
</dbReference>
<dbReference type="Ensembl" id="ENST00000521857.5">
    <molecule id="Q9Y216-2"/>
    <property type="protein sequence ID" value="ENSP00000429733.1"/>
    <property type="gene ID" value="ENSG00000003987.14"/>
</dbReference>
<dbReference type="GeneID" id="9108"/>
<dbReference type="KEGG" id="hsa:9108"/>
<dbReference type="MANE-Select" id="ENST00000180173.10">
    <property type="protein sequence ID" value="ENSP00000180173.4"/>
    <property type="RefSeq nucleotide sequence ID" value="NM_004686.5"/>
    <property type="RefSeq protein sequence ID" value="NP_004677.3"/>
</dbReference>
<dbReference type="UCSC" id="uc003wxm.4">
    <molecule id="Q9Y216-1"/>
    <property type="organism name" value="human"/>
</dbReference>
<dbReference type="AGR" id="HGNC:7454"/>
<dbReference type="CTD" id="9108"/>
<dbReference type="DisGeNET" id="9108"/>
<dbReference type="GeneCards" id="MTMR7"/>
<dbReference type="HGNC" id="HGNC:7454">
    <property type="gene designation" value="MTMR7"/>
</dbReference>
<dbReference type="HPA" id="ENSG00000003987">
    <property type="expression patterns" value="Tissue enhanced (brain, retina)"/>
</dbReference>
<dbReference type="MIM" id="603562">
    <property type="type" value="gene"/>
</dbReference>
<dbReference type="neXtProt" id="NX_Q9Y216"/>
<dbReference type="OpenTargets" id="ENSG00000003987"/>
<dbReference type="PharmGKB" id="PA31257"/>
<dbReference type="VEuPathDB" id="HostDB:ENSG00000003987"/>
<dbReference type="eggNOG" id="KOG1089">
    <property type="taxonomic scope" value="Eukaryota"/>
</dbReference>
<dbReference type="GeneTree" id="ENSGT00940000155777"/>
<dbReference type="HOGENOM" id="CLU_001839_3_2_1"/>
<dbReference type="InParanoid" id="Q9Y216"/>
<dbReference type="OMA" id="WTNRAEF"/>
<dbReference type="OrthoDB" id="271628at2759"/>
<dbReference type="PAN-GO" id="Q9Y216">
    <property type="GO annotations" value="4 GO annotations based on evolutionary models"/>
</dbReference>
<dbReference type="PhylomeDB" id="Q9Y216"/>
<dbReference type="TreeFam" id="TF315197"/>
<dbReference type="PathwayCommons" id="Q9Y216"/>
<dbReference type="Reactome" id="R-HSA-1660517">
    <property type="pathway name" value="Synthesis of PIPs at the late endosome membrane"/>
</dbReference>
<dbReference type="Reactome" id="R-HSA-1855183">
    <property type="pathway name" value="Synthesis of IP2, IP, and Ins in the cytosol"/>
</dbReference>
<dbReference type="SignaLink" id="Q9Y216"/>
<dbReference type="BioGRID-ORCS" id="9108">
    <property type="hits" value="10 hits in 1167 CRISPR screens"/>
</dbReference>
<dbReference type="ChiTaRS" id="MTMR7">
    <property type="organism name" value="human"/>
</dbReference>
<dbReference type="GenomeRNAi" id="9108"/>
<dbReference type="Pharos" id="Q9Y216">
    <property type="development level" value="Tbio"/>
</dbReference>
<dbReference type="PRO" id="PR:Q9Y216"/>
<dbReference type="Proteomes" id="UP000005640">
    <property type="component" value="Chromosome 8"/>
</dbReference>
<dbReference type="RNAct" id="Q9Y216">
    <property type="molecule type" value="protein"/>
</dbReference>
<dbReference type="Bgee" id="ENSG00000003987">
    <property type="expression patterns" value="Expressed in islet of Langerhans and 103 other cell types or tissues"/>
</dbReference>
<dbReference type="ExpressionAtlas" id="Q9Y216">
    <property type="expression patterns" value="baseline and differential"/>
</dbReference>
<dbReference type="GO" id="GO:0005737">
    <property type="term" value="C:cytoplasm"/>
    <property type="evidence" value="ECO:0000314"/>
    <property type="project" value="UniProtKB"/>
</dbReference>
<dbReference type="GO" id="GO:0005829">
    <property type="term" value="C:cytosol"/>
    <property type="evidence" value="ECO:0000304"/>
    <property type="project" value="Reactome"/>
</dbReference>
<dbReference type="GO" id="GO:0012505">
    <property type="term" value="C:endomembrane system"/>
    <property type="evidence" value="ECO:0007669"/>
    <property type="project" value="UniProtKB-SubCell"/>
</dbReference>
<dbReference type="GO" id="GO:0016020">
    <property type="term" value="C:membrane"/>
    <property type="evidence" value="ECO:0007669"/>
    <property type="project" value="UniProtKB-KW"/>
</dbReference>
<dbReference type="GO" id="GO:0016312">
    <property type="term" value="F:inositol bisphosphate phosphatase activity"/>
    <property type="evidence" value="ECO:0007669"/>
    <property type="project" value="RHEA"/>
</dbReference>
<dbReference type="GO" id="GO:0052629">
    <property type="term" value="F:phosphatidylinositol-3,5-bisphosphate 3-phosphatase activity"/>
    <property type="evidence" value="ECO:0000304"/>
    <property type="project" value="Reactome"/>
</dbReference>
<dbReference type="GO" id="GO:0106018">
    <property type="term" value="F:phosphatidylinositol-3,5-bisphosphate phosphatase activity"/>
    <property type="evidence" value="ECO:0000318"/>
    <property type="project" value="GO_Central"/>
</dbReference>
<dbReference type="GO" id="GO:0004438">
    <property type="term" value="F:phosphatidylinositol-3-phosphate phosphatase activity"/>
    <property type="evidence" value="ECO:0000318"/>
    <property type="project" value="GO_Central"/>
</dbReference>
<dbReference type="GO" id="GO:0004725">
    <property type="term" value="F:protein tyrosine phosphatase activity"/>
    <property type="evidence" value="ECO:0000304"/>
    <property type="project" value="ProtInc"/>
</dbReference>
<dbReference type="GO" id="GO:0006661">
    <property type="term" value="P:phosphatidylinositol biosynthetic process"/>
    <property type="evidence" value="ECO:0000304"/>
    <property type="project" value="Reactome"/>
</dbReference>
<dbReference type="GO" id="GO:0046856">
    <property type="term" value="P:phosphatidylinositol dephosphorylation"/>
    <property type="evidence" value="ECO:0000318"/>
    <property type="project" value="GO_Central"/>
</dbReference>
<dbReference type="GO" id="GO:0006470">
    <property type="term" value="P:protein dephosphorylation"/>
    <property type="evidence" value="ECO:0000304"/>
    <property type="project" value="ProtInc"/>
</dbReference>
<dbReference type="CDD" id="cd13344">
    <property type="entry name" value="PH-GRAM_MTMR7"/>
    <property type="match status" value="1"/>
</dbReference>
<dbReference type="CDD" id="cd14583">
    <property type="entry name" value="PTP-MTMR7"/>
    <property type="match status" value="1"/>
</dbReference>
<dbReference type="FunFam" id="2.30.29.30:FF:000135">
    <property type="entry name" value="Myotubularin related protein 6"/>
    <property type="match status" value="1"/>
</dbReference>
<dbReference type="Gene3D" id="2.30.29.30">
    <property type="entry name" value="Pleckstrin-homology domain (PH domain)/Phosphotyrosine-binding domain (PTB)"/>
    <property type="match status" value="1"/>
</dbReference>
<dbReference type="InterPro" id="IPR036003">
    <property type="entry name" value="MTMR7_PH-GRAM"/>
</dbReference>
<dbReference type="InterPro" id="IPR030572">
    <property type="entry name" value="MTMR7_PTP"/>
</dbReference>
<dbReference type="InterPro" id="IPR030564">
    <property type="entry name" value="Myotubularin"/>
</dbReference>
<dbReference type="InterPro" id="IPR010569">
    <property type="entry name" value="Myotubularin-like_Pase_dom"/>
</dbReference>
<dbReference type="InterPro" id="IPR011993">
    <property type="entry name" value="PH-like_dom_sf"/>
</dbReference>
<dbReference type="InterPro" id="IPR029021">
    <property type="entry name" value="Prot-tyrosine_phosphatase-like"/>
</dbReference>
<dbReference type="InterPro" id="IPR016130">
    <property type="entry name" value="Tyr_Pase_AS"/>
</dbReference>
<dbReference type="InterPro" id="IPR003595">
    <property type="entry name" value="Tyr_Pase_cat"/>
</dbReference>
<dbReference type="InterPro" id="IPR000387">
    <property type="entry name" value="Tyr_Pase_dom"/>
</dbReference>
<dbReference type="PANTHER" id="PTHR10807">
    <property type="entry name" value="MYOTUBULARIN-RELATED"/>
    <property type="match status" value="1"/>
</dbReference>
<dbReference type="PANTHER" id="PTHR10807:SF35">
    <property type="entry name" value="MYOTUBULARIN-RELATED PROTEIN 7"/>
    <property type="match status" value="1"/>
</dbReference>
<dbReference type="Pfam" id="PF06602">
    <property type="entry name" value="Myotub-related"/>
    <property type="match status" value="1"/>
</dbReference>
<dbReference type="Pfam" id="PF21098">
    <property type="entry name" value="PH-GRAM_MTMR6-like"/>
    <property type="match status" value="1"/>
</dbReference>
<dbReference type="SMART" id="SM00404">
    <property type="entry name" value="PTPc_motif"/>
    <property type="match status" value="1"/>
</dbReference>
<dbReference type="SUPFAM" id="SSF52799">
    <property type="entry name" value="(Phosphotyrosine protein) phosphatases II"/>
    <property type="match status" value="1"/>
</dbReference>
<dbReference type="SUPFAM" id="SSF50729">
    <property type="entry name" value="PH domain-like"/>
    <property type="match status" value="1"/>
</dbReference>
<dbReference type="PROSITE" id="PS51339">
    <property type="entry name" value="PPASE_MYOTUBULARIN"/>
    <property type="match status" value="1"/>
</dbReference>
<dbReference type="PROSITE" id="PS00383">
    <property type="entry name" value="TYR_PHOSPHATASE_1"/>
    <property type="match status" value="1"/>
</dbReference>
<dbReference type="PROSITE" id="PS50056">
    <property type="entry name" value="TYR_PHOSPHATASE_2"/>
    <property type="match status" value="1"/>
</dbReference>
<gene>
    <name evidence="14" type="primary">MTMR7</name>
</gene>
<protein>
    <recommendedName>
        <fullName evidence="2">Phosphatidylinositol-3-phosphate phosphatase MTMR7</fullName>
        <ecNumber evidence="2">3.1.3.64</ecNumber>
    </recommendedName>
    <alternativeName>
        <fullName evidence="2">Inositol 1,3-bisphosphate phosphatase</fullName>
    </alternativeName>
    <alternativeName>
        <fullName evidence="14">Myotubularin-related protein 7</fullName>
    </alternativeName>
</protein>
<feature type="chain" id="PRO_0000094940" description="Phosphatidylinositol-3-phosphate phosphatase MTMR7">
    <location>
        <begin position="1"/>
        <end position="660"/>
    </location>
</feature>
<feature type="domain" description="Myotubularin phosphatase" evidence="4">
    <location>
        <begin position="126"/>
        <end position="504"/>
    </location>
</feature>
<feature type="region of interest" description="Disordered" evidence="6">
    <location>
        <begin position="554"/>
        <end position="660"/>
    </location>
</feature>
<feature type="coiled-coil region" evidence="3">
    <location>
        <begin position="521"/>
        <end position="551"/>
    </location>
</feature>
<feature type="compositionally biased region" description="Polar residues" evidence="6">
    <location>
        <begin position="566"/>
        <end position="596"/>
    </location>
</feature>
<feature type="compositionally biased region" description="Basic and acidic residues" evidence="6">
    <location>
        <begin position="641"/>
        <end position="653"/>
    </location>
</feature>
<feature type="active site" description="Phosphocysteine intermediate" evidence="5">
    <location>
        <position position="338"/>
    </location>
</feature>
<feature type="binding site" evidence="1">
    <location>
        <position position="250"/>
    </location>
    <ligand>
        <name>a 1,2-diacyl-sn-glycero-3-phospho-(1D-myo-inositol-3-phosphate)</name>
        <dbReference type="ChEBI" id="CHEBI:58088"/>
    </ligand>
</feature>
<feature type="binding site" evidence="1">
    <location>
        <position position="275"/>
    </location>
    <ligand>
        <name>a 1,2-diacyl-sn-glycero-3-phospho-(1D-myo-inositol-3-phosphate)</name>
        <dbReference type="ChEBI" id="CHEBI:58088"/>
    </ligand>
</feature>
<feature type="binding site" evidence="1">
    <location>
        <position position="276"/>
    </location>
    <ligand>
        <name>a 1,2-diacyl-sn-glycero-3-phospho-(1D-myo-inositol-3-phosphate)</name>
        <dbReference type="ChEBI" id="CHEBI:58088"/>
    </ligand>
</feature>
<feature type="binding site" evidence="1">
    <location>
        <position position="339"/>
    </location>
    <ligand>
        <name>a 1,2-diacyl-sn-glycero-3-phospho-(1D-myo-inositol-3-phosphate)</name>
        <dbReference type="ChEBI" id="CHEBI:58088"/>
    </ligand>
</feature>
<feature type="binding site" evidence="1">
    <location>
        <position position="340"/>
    </location>
    <ligand>
        <name>a 1,2-diacyl-sn-glycero-3-phospho-(1D-myo-inositol-3-phosphate)</name>
        <dbReference type="ChEBI" id="CHEBI:58088"/>
    </ligand>
</feature>
<feature type="binding site" evidence="1">
    <location>
        <position position="341"/>
    </location>
    <ligand>
        <name>a 1,2-diacyl-sn-glycero-3-phospho-(1D-myo-inositol-3-phosphate)</name>
        <dbReference type="ChEBI" id="CHEBI:58088"/>
    </ligand>
</feature>
<feature type="binding site" evidence="1">
    <location>
        <position position="342"/>
    </location>
    <ligand>
        <name>a 1,2-diacyl-sn-glycero-3-phospho-(1D-myo-inositol-3-phosphate)</name>
        <dbReference type="ChEBI" id="CHEBI:58088"/>
    </ligand>
</feature>
<feature type="binding site" evidence="1">
    <location>
        <position position="343"/>
    </location>
    <ligand>
        <name>a 1,2-diacyl-sn-glycero-3-phospho-(1D-myo-inositol-3-phosphate)</name>
        <dbReference type="ChEBI" id="CHEBI:58088"/>
    </ligand>
</feature>
<feature type="binding site" evidence="1">
    <location>
        <position position="344"/>
    </location>
    <ligand>
        <name>a 1,2-diacyl-sn-glycero-3-phospho-(1D-myo-inositol-3-phosphate)</name>
        <dbReference type="ChEBI" id="CHEBI:58088"/>
    </ligand>
</feature>
<feature type="binding site" evidence="1">
    <location>
        <position position="384"/>
    </location>
    <ligand>
        <name>a 1,2-diacyl-sn-glycero-3-phospho-(1D-myo-inositol-3-phosphate)</name>
        <dbReference type="ChEBI" id="CHEBI:58088"/>
    </ligand>
</feature>
<feature type="modified residue" description="Phosphothreonine" evidence="2">
    <location>
        <position position="578"/>
    </location>
</feature>
<feature type="splice variant" id="VSP_017000" description="In isoform 2." evidence="12">
    <original>RLEKIQKVQLNCTKVKSKQSEPSKHSGFSTSDNSIAN</original>
    <variation>VRHTCFVNLFSVLIS</variation>
    <location>
        <begin position="541"/>
        <end position="577"/>
    </location>
</feature>
<feature type="splice variant" id="VSP_017001" description="In isoform 2." evidence="12">
    <location>
        <begin position="578"/>
        <end position="660"/>
    </location>
</feature>
<feature type="sequence variant" id="VAR_059779" description="In dbSNP:rs7388581." evidence="7 8 10">
    <original>P</original>
    <variation>A</variation>
    <location>
        <position position="44"/>
    </location>
</feature>
<feature type="sequence variant" id="VAR_057144" description="In dbSNP:rs3764796." evidence="7">
    <original>Q</original>
    <variation>H</variation>
    <location>
        <position position="559"/>
    </location>
</feature>
<feature type="sequence conflict" description="In Ref. 2; CAH18096." evidence="13" ref="2">
    <original>T</original>
    <variation>A</variation>
    <location>
        <position position="241"/>
    </location>
</feature>
<feature type="sequence conflict" description="In Ref. 4; AAC77820." evidence="13" ref="4">
    <original>Y</original>
    <variation>N</variation>
    <location>
        <position position="470"/>
    </location>
</feature>
<feature type="sequence conflict" description="In Ref. 4; AAC77820." evidence="13" ref="4">
    <original>P</original>
    <variation>L</variation>
    <location>
        <position position="473"/>
    </location>
</feature>
<feature type="sequence conflict" description="In Ref. 4; AAC77820." evidence="13" ref="4">
    <original>L</original>
    <variation>F</variation>
    <location>
        <position position="486"/>
    </location>
</feature>
<name>MTMR7_HUMAN</name>
<reference key="1">
    <citation type="journal article" date="2004" name="Nat. Genet.">
        <title>Complete sequencing and characterization of 21,243 full-length human cDNAs.</title>
        <authorList>
            <person name="Ota T."/>
            <person name="Suzuki Y."/>
            <person name="Nishikawa T."/>
            <person name="Otsuki T."/>
            <person name="Sugiyama T."/>
            <person name="Irie R."/>
            <person name="Wakamatsu A."/>
            <person name="Hayashi K."/>
            <person name="Sato H."/>
            <person name="Nagai K."/>
            <person name="Kimura K."/>
            <person name="Makita H."/>
            <person name="Sekine M."/>
            <person name="Obayashi M."/>
            <person name="Nishi T."/>
            <person name="Shibahara T."/>
            <person name="Tanaka T."/>
            <person name="Ishii S."/>
            <person name="Yamamoto J."/>
            <person name="Saito K."/>
            <person name="Kawai Y."/>
            <person name="Isono Y."/>
            <person name="Nakamura Y."/>
            <person name="Nagahari K."/>
            <person name="Murakami K."/>
            <person name="Yasuda T."/>
            <person name="Iwayanagi T."/>
            <person name="Wagatsuma M."/>
            <person name="Shiratori A."/>
            <person name="Sudo H."/>
            <person name="Hosoiri T."/>
            <person name="Kaku Y."/>
            <person name="Kodaira H."/>
            <person name="Kondo H."/>
            <person name="Sugawara M."/>
            <person name="Takahashi M."/>
            <person name="Kanda K."/>
            <person name="Yokoi T."/>
            <person name="Furuya T."/>
            <person name="Kikkawa E."/>
            <person name="Omura Y."/>
            <person name="Abe K."/>
            <person name="Kamihara K."/>
            <person name="Katsuta N."/>
            <person name="Sato K."/>
            <person name="Tanikawa M."/>
            <person name="Yamazaki M."/>
            <person name="Ninomiya K."/>
            <person name="Ishibashi T."/>
            <person name="Yamashita H."/>
            <person name="Murakawa K."/>
            <person name="Fujimori K."/>
            <person name="Tanai H."/>
            <person name="Kimata M."/>
            <person name="Watanabe M."/>
            <person name="Hiraoka S."/>
            <person name="Chiba Y."/>
            <person name="Ishida S."/>
            <person name="Ono Y."/>
            <person name="Takiguchi S."/>
            <person name="Watanabe S."/>
            <person name="Yosida M."/>
            <person name="Hotuta T."/>
            <person name="Kusano J."/>
            <person name="Kanehori K."/>
            <person name="Takahashi-Fujii A."/>
            <person name="Hara H."/>
            <person name="Tanase T.-O."/>
            <person name="Nomura Y."/>
            <person name="Togiya S."/>
            <person name="Komai F."/>
            <person name="Hara R."/>
            <person name="Takeuchi K."/>
            <person name="Arita M."/>
            <person name="Imose N."/>
            <person name="Musashino K."/>
            <person name="Yuuki H."/>
            <person name="Oshima A."/>
            <person name="Sasaki N."/>
            <person name="Aotsuka S."/>
            <person name="Yoshikawa Y."/>
            <person name="Matsunawa H."/>
            <person name="Ichihara T."/>
            <person name="Shiohata N."/>
            <person name="Sano S."/>
            <person name="Moriya S."/>
            <person name="Momiyama H."/>
            <person name="Satoh N."/>
            <person name="Takami S."/>
            <person name="Terashima Y."/>
            <person name="Suzuki O."/>
            <person name="Nakagawa S."/>
            <person name="Senoh A."/>
            <person name="Mizoguchi H."/>
            <person name="Goto Y."/>
            <person name="Shimizu F."/>
            <person name="Wakebe H."/>
            <person name="Hishigaki H."/>
            <person name="Watanabe T."/>
            <person name="Sugiyama A."/>
            <person name="Takemoto M."/>
            <person name="Kawakami B."/>
            <person name="Yamazaki M."/>
            <person name="Watanabe K."/>
            <person name="Kumagai A."/>
            <person name="Itakura S."/>
            <person name="Fukuzumi Y."/>
            <person name="Fujimori Y."/>
            <person name="Komiyama M."/>
            <person name="Tashiro H."/>
            <person name="Tanigami A."/>
            <person name="Fujiwara T."/>
            <person name="Ono T."/>
            <person name="Yamada K."/>
            <person name="Fujii Y."/>
            <person name="Ozaki K."/>
            <person name="Hirao M."/>
            <person name="Ohmori Y."/>
            <person name="Kawabata A."/>
            <person name="Hikiji T."/>
            <person name="Kobatake N."/>
            <person name="Inagaki H."/>
            <person name="Ikema Y."/>
            <person name="Okamoto S."/>
            <person name="Okitani R."/>
            <person name="Kawakami T."/>
            <person name="Noguchi S."/>
            <person name="Itoh T."/>
            <person name="Shigeta K."/>
            <person name="Senba T."/>
            <person name="Matsumura K."/>
            <person name="Nakajima Y."/>
            <person name="Mizuno T."/>
            <person name="Morinaga M."/>
            <person name="Sasaki M."/>
            <person name="Togashi T."/>
            <person name="Oyama M."/>
            <person name="Hata H."/>
            <person name="Watanabe M."/>
            <person name="Komatsu T."/>
            <person name="Mizushima-Sugano J."/>
            <person name="Satoh T."/>
            <person name="Shirai Y."/>
            <person name="Takahashi Y."/>
            <person name="Nakagawa K."/>
            <person name="Okumura K."/>
            <person name="Nagase T."/>
            <person name="Nomura N."/>
            <person name="Kikuchi H."/>
            <person name="Masuho Y."/>
            <person name="Yamashita R."/>
            <person name="Nakai K."/>
            <person name="Yada T."/>
            <person name="Nakamura Y."/>
            <person name="Ohara O."/>
            <person name="Isogai T."/>
            <person name="Sugano S."/>
        </authorList>
    </citation>
    <scope>NUCLEOTIDE SEQUENCE [LARGE SCALE MRNA] (ISOFORM 1)</scope>
    <scope>VARIANTS ALA-44 AND HIS-559</scope>
    <source>
        <tissue>Amygdala</tissue>
    </source>
</reference>
<reference key="2">
    <citation type="journal article" date="2007" name="BMC Genomics">
        <title>The full-ORF clone resource of the German cDNA consortium.</title>
        <authorList>
            <person name="Bechtel S."/>
            <person name="Rosenfelder H."/>
            <person name="Duda A."/>
            <person name="Schmidt C.P."/>
            <person name="Ernst U."/>
            <person name="Wellenreuther R."/>
            <person name="Mehrle A."/>
            <person name="Schuster C."/>
            <person name="Bahr A."/>
            <person name="Bloecker H."/>
            <person name="Heubner D."/>
            <person name="Hoerlein A."/>
            <person name="Michel G."/>
            <person name="Wedler H."/>
            <person name="Koehrer K."/>
            <person name="Ottenwaelder B."/>
            <person name="Poustka A."/>
            <person name="Wiemann S."/>
            <person name="Schupp I."/>
        </authorList>
    </citation>
    <scope>NUCLEOTIDE SEQUENCE [LARGE SCALE MRNA] (ISOFORM 1)</scope>
    <scope>VARIANT ALA-44</scope>
    <source>
        <tissue>Amygdala</tissue>
    </source>
</reference>
<reference key="3">
    <citation type="journal article" date="2006" name="Nature">
        <title>DNA sequence and analysis of human chromosome 8.</title>
        <authorList>
            <person name="Nusbaum C."/>
            <person name="Mikkelsen T.S."/>
            <person name="Zody M.C."/>
            <person name="Asakawa S."/>
            <person name="Taudien S."/>
            <person name="Garber M."/>
            <person name="Kodira C.D."/>
            <person name="Schueler M.G."/>
            <person name="Shimizu A."/>
            <person name="Whittaker C.A."/>
            <person name="Chang J.L."/>
            <person name="Cuomo C.A."/>
            <person name="Dewar K."/>
            <person name="FitzGerald M.G."/>
            <person name="Yang X."/>
            <person name="Allen N.R."/>
            <person name="Anderson S."/>
            <person name="Asakawa T."/>
            <person name="Blechschmidt K."/>
            <person name="Bloom T."/>
            <person name="Borowsky M.L."/>
            <person name="Butler J."/>
            <person name="Cook A."/>
            <person name="Corum B."/>
            <person name="DeArellano K."/>
            <person name="DeCaprio D."/>
            <person name="Dooley K.T."/>
            <person name="Dorris L. III"/>
            <person name="Engels R."/>
            <person name="Gloeckner G."/>
            <person name="Hafez N."/>
            <person name="Hagopian D.S."/>
            <person name="Hall J.L."/>
            <person name="Ishikawa S.K."/>
            <person name="Jaffe D.B."/>
            <person name="Kamat A."/>
            <person name="Kudoh J."/>
            <person name="Lehmann R."/>
            <person name="Lokitsang T."/>
            <person name="Macdonald P."/>
            <person name="Major J.E."/>
            <person name="Matthews C.D."/>
            <person name="Mauceli E."/>
            <person name="Menzel U."/>
            <person name="Mihalev A.H."/>
            <person name="Minoshima S."/>
            <person name="Murayama Y."/>
            <person name="Naylor J.W."/>
            <person name="Nicol R."/>
            <person name="Nguyen C."/>
            <person name="O'Leary S.B."/>
            <person name="O'Neill K."/>
            <person name="Parker S.C.J."/>
            <person name="Polley A."/>
            <person name="Raymond C.K."/>
            <person name="Reichwald K."/>
            <person name="Rodriguez J."/>
            <person name="Sasaki T."/>
            <person name="Schilhabel M."/>
            <person name="Siddiqui R."/>
            <person name="Smith C.L."/>
            <person name="Sneddon T.P."/>
            <person name="Talamas J.A."/>
            <person name="Tenzin P."/>
            <person name="Topham K."/>
            <person name="Venkataraman V."/>
            <person name="Wen G."/>
            <person name="Yamazaki S."/>
            <person name="Young S.K."/>
            <person name="Zeng Q."/>
            <person name="Zimmer A.R."/>
            <person name="Rosenthal A."/>
            <person name="Birren B.W."/>
            <person name="Platzer M."/>
            <person name="Shimizu N."/>
            <person name="Lander E.S."/>
        </authorList>
    </citation>
    <scope>NUCLEOTIDE SEQUENCE [LARGE SCALE GENOMIC DNA]</scope>
</reference>
<reference key="4">
    <citation type="journal article" date="2004" name="Genome Res.">
        <title>The status, quality, and expansion of the NIH full-length cDNA project: the Mammalian Gene Collection (MGC).</title>
        <authorList>
            <consortium name="The MGC Project Team"/>
        </authorList>
    </citation>
    <scope>NUCLEOTIDE SEQUENCE [LARGE SCALE MRNA] (ISOFORM 1)</scope>
    <scope>VARIANT ALA-44</scope>
</reference>
<reference key="5">
    <citation type="journal article" date="1998" name="Hum. Mol. Genet.">
        <title>Characterization of the myotubularin dual specificity phosphatase gene family from yeast to human.</title>
        <authorList>
            <person name="Laporte J."/>
            <person name="Blondeau F."/>
            <person name="Buj-Bello A."/>
            <person name="Tentler D."/>
            <person name="Kretz C."/>
            <person name="Dahl N."/>
            <person name="Mandel J.-L."/>
        </authorList>
    </citation>
    <scope>NUCLEOTIDE SEQUENCE [MRNA] OF 165-577 (ISOFORM 2)</scope>
    <scope>TISSUE SPECIFICITY</scope>
</reference>
<reference key="6">
    <citation type="journal article" date="2006" name="J. Cell Sci.">
        <title>Systematic analysis of myotubularins: heteromeric interactions, subcellular localisation and endosome related functions.</title>
        <authorList>
            <person name="Lorenzo O."/>
            <person name="Urbe S."/>
            <person name="Clague M.J."/>
        </authorList>
    </citation>
    <scope>SUBCELLULAR LOCATION</scope>
</reference>
<sequence>MEHIRTPKVENVRLVDRVSPKKAALGTLYLTATHVIFVENSPDPRKETWILHSQISTIEKQATTATGCPLLIRCKNFQIIQLIIPQERDCHDVYISLIRLARPVKYEELYCFSFNPMLDKEEREQGWVLIDLSEEYTRMGLPNHYWQLSDVNRDYRVCDSYPTELYVPKSATAHIIVGSSKFRSRRRFPVLSYYYKDNHASICRSSQPLSGFSARCLEDEQMLQAIRKANPGSDFVYVVDTRPKLNAMANRAAGKGYENEDNYSNIKFQFIGIENIHVMRNSLQKMLEVCELKSPSMSDFLWGLENSGWLRHIKAIMDAGIFIAKAVSEEGASVLVHCSDGWDRTAQVCSVASLLLDPHYRTLKGFMVLIEKDWISFGHKFNHRYGNLDGDPKEISPVIDQFIECVWQLMEQFPCAFEFNERFLIHIQHHIYSCQFGNFLCNSQKERRELKIQERTYSLWAHLWKNRADYLNPLFRADHSQTQGTLHLPTTPCNFMYKFWSGMYNRFEKGMQPRQSVTDYLMAVKEETQQLEEELEALEERLEKIQKVQLNCTKVKSKQSEPSKHSGFSTSDNSIANTPQDYSGNMKSFPSRSPSQGDEDSALILTQDNLKSSDPDLSANSDQESGVEDLSCRSPSGGEHAPSEDSGKDRDSDEAVFLTA</sequence>
<proteinExistence type="evidence at protein level"/>
<evidence type="ECO:0000250" key="1">
    <source>
        <dbReference type="UniProtKB" id="Q13614"/>
    </source>
</evidence>
<evidence type="ECO:0000250" key="2">
    <source>
        <dbReference type="UniProtKB" id="Q9Z2C9"/>
    </source>
</evidence>
<evidence type="ECO:0000255" key="3"/>
<evidence type="ECO:0000255" key="4">
    <source>
        <dbReference type="PROSITE-ProRule" id="PRU00669"/>
    </source>
</evidence>
<evidence type="ECO:0000255" key="5">
    <source>
        <dbReference type="PROSITE-ProRule" id="PRU10044"/>
    </source>
</evidence>
<evidence type="ECO:0000256" key="6">
    <source>
        <dbReference type="SAM" id="MobiDB-lite"/>
    </source>
</evidence>
<evidence type="ECO:0000269" key="7">
    <source>
    </source>
</evidence>
<evidence type="ECO:0000269" key="8">
    <source>
    </source>
</evidence>
<evidence type="ECO:0000269" key="9">
    <source>
    </source>
</evidence>
<evidence type="ECO:0000269" key="10">
    <source>
    </source>
</evidence>
<evidence type="ECO:0000269" key="11">
    <source>
    </source>
</evidence>
<evidence type="ECO:0000303" key="12">
    <source>
    </source>
</evidence>
<evidence type="ECO:0000305" key="13"/>
<evidence type="ECO:0000312" key="14">
    <source>
        <dbReference type="HGNC" id="HGNC:7454"/>
    </source>
</evidence>
<comment type="function">
    <text evidence="2">Lipid phosphatase that specifically dephosphorylates the D-3 position of phosphatidylinositol 3-phosphate (PtdIns(3)P) and inositol 1,3-bisphosphate (Ins(1,3)P2).</text>
</comment>
<comment type="catalytic activity">
    <reaction evidence="2">
        <text>a 1,2-diacyl-sn-glycero-3-phospho-(1D-myo-inositol-3-phosphate) + H2O = a 1,2-diacyl-sn-glycero-3-phospho-(1D-myo-inositol) + phosphate</text>
        <dbReference type="Rhea" id="RHEA:12316"/>
        <dbReference type="ChEBI" id="CHEBI:15377"/>
        <dbReference type="ChEBI" id="CHEBI:43474"/>
        <dbReference type="ChEBI" id="CHEBI:57880"/>
        <dbReference type="ChEBI" id="CHEBI:58088"/>
        <dbReference type="EC" id="3.1.3.64"/>
    </reaction>
</comment>
<comment type="catalytic activity">
    <reaction evidence="2">
        <text>1D-myo-inositol 1,3-bisphosphate + H2O = 1D-myo-inositol 1-phosphate + phosphate</text>
        <dbReference type="Rhea" id="RHEA:57840"/>
        <dbReference type="ChEBI" id="CHEBI:15377"/>
        <dbReference type="ChEBI" id="CHEBI:43474"/>
        <dbReference type="ChEBI" id="CHEBI:58433"/>
        <dbReference type="ChEBI" id="CHEBI:83242"/>
    </reaction>
</comment>
<comment type="activity regulation">
    <text evidence="2">Interaction with MTMR9 increases phosphatase activity.</text>
</comment>
<comment type="subunit">
    <text evidence="2">Heterodimer (via C-terminus) with MTMR9 (via coiled coil domain); the interaction enhances MTMR7 catalytic activity (By similarity). Does not homodimerize (By similarity). Interacts with RAB1B (in GDP-bound form) (By similarity).</text>
</comment>
<comment type="interaction">
    <interactant intactId="EBI-10293003">
        <id>Q9Y216</id>
    </interactant>
    <interactant intactId="EBI-741406">
        <id>P51946</id>
        <label>CCNH</label>
    </interactant>
    <organismsDiffer>false</organismsDiffer>
    <experiments>6</experiments>
</comment>
<comment type="interaction">
    <interactant intactId="EBI-10293003">
        <id>Q9Y216</id>
    </interactant>
    <interactant intactId="EBI-744593">
        <id>Q96QG7</id>
        <label>MTMR9</label>
    </interactant>
    <organismsDiffer>false</organismsDiffer>
    <experiments>16</experiments>
</comment>
<comment type="subcellular location">
    <subcellularLocation>
        <location evidence="9">Cytoplasm</location>
    </subcellularLocation>
    <subcellularLocation>
        <location evidence="2">Endomembrane system</location>
        <topology evidence="2">Peripheral membrane protein</topology>
        <orientation evidence="2">Cytoplasmic side</orientation>
    </subcellularLocation>
    <text evidence="2">May partially localize to endosomes and/or the Golgi apparatus.</text>
</comment>
<comment type="alternative products">
    <event type="alternative splicing"/>
    <isoform>
        <id>Q9Y216-1</id>
        <name>1</name>
        <sequence type="displayed"/>
    </isoform>
    <isoform>
        <id>Q9Y216-2</id>
        <name>2</name>
        <sequence type="described" ref="VSP_017000 VSP_017001"/>
    </isoform>
</comment>
<comment type="tissue specificity">
    <text evidence="11">Expressed specifically in brain.</text>
</comment>
<comment type="similarity">
    <text evidence="13">Belongs to the protein-tyrosine phosphatase family. Non-receptor class myotubularin subfamily.</text>
</comment>
<keyword id="KW-0025">Alternative splicing</keyword>
<keyword id="KW-0175">Coiled coil</keyword>
<keyword id="KW-0963">Cytoplasm</keyword>
<keyword id="KW-0378">Hydrolase</keyword>
<keyword id="KW-0443">Lipid metabolism</keyword>
<keyword id="KW-0472">Membrane</keyword>
<keyword id="KW-0597">Phosphoprotein</keyword>
<keyword id="KW-1267">Proteomics identification</keyword>
<keyword id="KW-1185">Reference proteome</keyword>